<evidence type="ECO:0000250" key="1"/>
<evidence type="ECO:0000305" key="2"/>
<sequence>MVDEATKRTLAAIPLLKTRAGPRDKDQWVGRLKEELVSLIKYVENNKKQDNDWFRLESNKEGTRWFGKCWYVHNLLKYEFDVEFDIPVTYPGTAPEIALPELDGKTAKMYRGGKICLTDHFKPLWARNVPKFGIAHAMALGLGPWLAVEIPDLVEKGIIVHKEKTSSE</sequence>
<gene>
    <name type="ORF">TRIADDRAFT_35934</name>
</gene>
<dbReference type="EMBL" id="DS985244">
    <property type="protein sequence ID" value="EDV26152.1"/>
    <property type="molecule type" value="Genomic_DNA"/>
</dbReference>
<dbReference type="RefSeq" id="XP_002112185.1">
    <property type="nucleotide sequence ID" value="XM_002112149.1"/>
</dbReference>
<dbReference type="SMR" id="B3RTL9"/>
<dbReference type="FunCoup" id="B3RTL9">
    <property type="interactions" value="1629"/>
</dbReference>
<dbReference type="STRING" id="10228.B3RTL9"/>
<dbReference type="EnsemblMetazoa" id="TriadT35934">
    <property type="protein sequence ID" value="TriadP35934"/>
    <property type="gene ID" value="TriadG35934"/>
</dbReference>
<dbReference type="GeneID" id="6753398"/>
<dbReference type="KEGG" id="tad:TRIADDRAFT_35934"/>
<dbReference type="CTD" id="6753398"/>
<dbReference type="eggNOG" id="KOG3357">
    <property type="taxonomic scope" value="Eukaryota"/>
</dbReference>
<dbReference type="HOGENOM" id="CLU_101170_0_0_1"/>
<dbReference type="InParanoid" id="B3RTL9"/>
<dbReference type="OMA" id="LWQKNVP"/>
<dbReference type="OrthoDB" id="10256182at2759"/>
<dbReference type="PhylomeDB" id="B3RTL9"/>
<dbReference type="Proteomes" id="UP000009022">
    <property type="component" value="Unassembled WGS sequence"/>
</dbReference>
<dbReference type="GO" id="GO:0061657">
    <property type="term" value="F:UFM1 conjugating enzyme activity"/>
    <property type="evidence" value="ECO:0007669"/>
    <property type="project" value="InterPro"/>
</dbReference>
<dbReference type="GO" id="GO:0071568">
    <property type="term" value="F:UFM1 transferase activity"/>
    <property type="evidence" value="ECO:0000318"/>
    <property type="project" value="GO_Central"/>
</dbReference>
<dbReference type="GO" id="GO:0071569">
    <property type="term" value="P:protein ufmylation"/>
    <property type="evidence" value="ECO:0007669"/>
    <property type="project" value="InterPro"/>
</dbReference>
<dbReference type="GO" id="GO:0034976">
    <property type="term" value="P:response to endoplasmic reticulum stress"/>
    <property type="evidence" value="ECO:0000318"/>
    <property type="project" value="GO_Central"/>
</dbReference>
<dbReference type="GO" id="GO:0061709">
    <property type="term" value="P:reticulophagy"/>
    <property type="evidence" value="ECO:0000318"/>
    <property type="project" value="GO_Central"/>
</dbReference>
<dbReference type="CDD" id="cd11686">
    <property type="entry name" value="UBCc_UFC1"/>
    <property type="match status" value="1"/>
</dbReference>
<dbReference type="FunFam" id="3.10.110.10:FF:000042">
    <property type="entry name" value="Ubiquitin-fold modifier-conjugating enzyme 1"/>
    <property type="match status" value="1"/>
</dbReference>
<dbReference type="Gene3D" id="3.10.110.10">
    <property type="entry name" value="Ubiquitin Conjugating Enzyme"/>
    <property type="match status" value="1"/>
</dbReference>
<dbReference type="InterPro" id="IPR016135">
    <property type="entry name" value="UBQ-conjugating_enzyme/RWD"/>
</dbReference>
<dbReference type="InterPro" id="IPR014806">
    <property type="entry name" value="Ufc1"/>
</dbReference>
<dbReference type="PANTHER" id="PTHR12921">
    <property type="entry name" value="UBIQUITIN-FOLD MODIFIER-CONJUGATING ENZYME 1"/>
    <property type="match status" value="1"/>
</dbReference>
<dbReference type="PANTHER" id="PTHR12921:SF0">
    <property type="entry name" value="UBIQUITIN-FOLD MODIFIER-CONJUGATING ENZYME 1"/>
    <property type="match status" value="1"/>
</dbReference>
<dbReference type="Pfam" id="PF08694">
    <property type="entry name" value="UFC1"/>
    <property type="match status" value="1"/>
</dbReference>
<dbReference type="PIRSF" id="PIRSF008716">
    <property type="entry name" value="DUF1782"/>
    <property type="match status" value="1"/>
</dbReference>
<dbReference type="SUPFAM" id="SSF54495">
    <property type="entry name" value="UBC-like"/>
    <property type="match status" value="1"/>
</dbReference>
<name>UFC1_TRIAD</name>
<accession>B3RTL9</accession>
<proteinExistence type="inferred from homology"/>
<organism>
    <name type="scientific">Trichoplax adhaerens</name>
    <name type="common">Trichoplax reptans</name>
    <dbReference type="NCBI Taxonomy" id="10228"/>
    <lineage>
        <taxon>Eukaryota</taxon>
        <taxon>Metazoa</taxon>
        <taxon>Placozoa</taxon>
        <taxon>Uniplacotomia</taxon>
        <taxon>Trichoplacea</taxon>
        <taxon>Trichoplacidae</taxon>
        <taxon>Trichoplax</taxon>
    </lineage>
</organism>
<reference key="1">
    <citation type="journal article" date="2008" name="Nature">
        <title>The Trichoplax genome and the nature of placozoans.</title>
        <authorList>
            <person name="Srivastava M."/>
            <person name="Begovic E."/>
            <person name="Chapman J."/>
            <person name="Putnam N.H."/>
            <person name="Hellsten U."/>
            <person name="Kawashima T."/>
            <person name="Kuo A."/>
            <person name="Mitros T."/>
            <person name="Salamov A."/>
            <person name="Carpenter M.L."/>
            <person name="Signorovitch A.Y."/>
            <person name="Moreno M.A."/>
            <person name="Kamm K."/>
            <person name="Grimwood J."/>
            <person name="Schmutz J."/>
            <person name="Shapiro H."/>
            <person name="Grigoriev I.V."/>
            <person name="Buss L.W."/>
            <person name="Schierwater B."/>
            <person name="Dellaporta S.L."/>
            <person name="Rokhsar D.S."/>
        </authorList>
    </citation>
    <scope>NUCLEOTIDE SEQUENCE [LARGE SCALE GENOMIC DNA]</scope>
    <source>
        <strain>Grell-BS-1999</strain>
    </source>
</reference>
<protein>
    <recommendedName>
        <fullName>Ubiquitin-fold modifier-conjugating enzyme 1</fullName>
    </recommendedName>
    <alternativeName>
        <fullName>Ufm1-conjugating enzyme 1</fullName>
    </alternativeName>
</protein>
<comment type="function">
    <text evidence="1">E2-like enzyme which forms an intermediate with UFM1 via a thioester linkage.</text>
</comment>
<comment type="similarity">
    <text evidence="2">Belongs to the ubiquitin-conjugating enzyme family. UFC1 subfamily.</text>
</comment>
<feature type="chain" id="PRO_0000391959" description="Ubiquitin-fold modifier-conjugating enzyme 1">
    <location>
        <begin position="1"/>
        <end position="168"/>
    </location>
</feature>
<feature type="active site" description="Glycyl thioester intermediate" evidence="1">
    <location>
        <position position="116"/>
    </location>
</feature>
<keyword id="KW-1185">Reference proteome</keyword>
<keyword id="KW-0833">Ubl conjugation pathway</keyword>